<accession>B6QHL4</accession>
<sequence length="803" mass="89529">MVRPAQVRAFSGLARSATSTRLIPSQCQNALRCASLPGSRLSALPLRATQITSSPLRKWHQIRNASAAATATLAEQAAADPEGLSQEEIISNIDAEEWKRISKVRNIGIAAHIDSGKTTATERVLFYTGRINSIHEVRGRDSVGAKMDSMDLEREKGITIQSAATFCDWVKKEDGKEEKYHFNLIDTPGHIDFTIEVERALRVLDGAVMILCAVSGVQSQTITVDRQMKRYNVPRISFVNKMDRMGANPFKAIDQINSKLRLPAAAVQVPIGAEDEFQGVVDLIRMKAIYNEGPRGEVIVEKDEIPEHLKPVAEERRRILIETLADVDDEIAEIFLDEREPTNEQIKDAIRRATIALKFTPVFMGSALADKSIQPMLDGVCDYLPNPSEVTNLALDQKRKEAQVKLLPYGSEPFVGLAFKLEESNFGQLTYIRVYQGTLRKGANVFNARNDKKVKVPRIVRMHSNEMEEVQEIGAGEICAVFGVDCASGDTFTDGQLAYTMSSMFVPEPVISLSIKPKNNKDSANFSKAMARFQREDPTFRVSYDAESEQTIISGMGELHLDIYVERMRREYKVDCETGQPQVAYRETIGRRVEFDHLLKKQSGGPGDYARVVGWMEPSDSLEENKFEEQIVGGAISEKFLFACEKGFNLATEKGPLIGHKVLGTKMVINDGATHMTDSSEMSFKNATQQAFRKAFMESQPHVLEPLMKTVVTAPIEFQGDVIGLLNKRNATINDSEIGVDEFTVYADCSLNGMFGFSSHLRAATQGKGEYTMEFSHYEKAPGQLQKELVQKYLKAQADRHKK</sequence>
<evidence type="ECO:0000255" key="1">
    <source>
        <dbReference type="HAMAP-Rule" id="MF_03061"/>
    </source>
</evidence>
<evidence type="ECO:0000305" key="2"/>
<protein>
    <recommendedName>
        <fullName evidence="1">Elongation factor G, mitochondrial</fullName>
        <shortName evidence="1">EF-Gmt</shortName>
    </recommendedName>
    <alternativeName>
        <fullName evidence="1">Elongation factor G 1, mitochondrial</fullName>
        <shortName evidence="1">mEF-G 1</shortName>
    </alternativeName>
    <alternativeName>
        <fullName evidence="1">Elongation factor G1</fullName>
    </alternativeName>
</protein>
<organism>
    <name type="scientific">Talaromyces marneffei (strain ATCC 18224 / CBS 334.59 / QM 7333)</name>
    <name type="common">Penicillium marneffei</name>
    <dbReference type="NCBI Taxonomy" id="441960"/>
    <lineage>
        <taxon>Eukaryota</taxon>
        <taxon>Fungi</taxon>
        <taxon>Dikarya</taxon>
        <taxon>Ascomycota</taxon>
        <taxon>Pezizomycotina</taxon>
        <taxon>Eurotiomycetes</taxon>
        <taxon>Eurotiomycetidae</taxon>
        <taxon>Eurotiales</taxon>
        <taxon>Trichocomaceae</taxon>
        <taxon>Talaromyces</taxon>
        <taxon>Talaromyces sect. Talaromyces</taxon>
    </lineage>
</organism>
<comment type="function">
    <text evidence="1">Mitochondrial GTPase that catalyzes the GTP-dependent ribosomal translocation step during translation elongation. During this step, the ribosome changes from the pre-translocational (PRE) to the post-translocational (POST) state as the newly formed A-site-bound peptidyl-tRNA and P-site-bound deacylated tRNA move to the P and E sites, respectively. Catalyzes the coordinated movement of the two tRNA molecules, the mRNA and conformational changes in the ribosome.</text>
</comment>
<comment type="pathway">
    <text evidence="1">Protein biosynthesis; polypeptide chain elongation.</text>
</comment>
<comment type="subcellular location">
    <subcellularLocation>
        <location evidence="1">Mitochondrion</location>
    </subcellularLocation>
</comment>
<comment type="similarity">
    <text evidence="2">Belongs to the TRAFAC class translation factor GTPase superfamily. Classic translation factor GTPase family. EF-G/EF-2 subfamily.</text>
</comment>
<reference key="1">
    <citation type="journal article" date="2015" name="Genome Announc.">
        <title>Genome sequence of the AIDS-associated pathogen Penicillium marneffei (ATCC18224) and its near taxonomic relative Talaromyces stipitatus (ATCC10500).</title>
        <authorList>
            <person name="Nierman W.C."/>
            <person name="Fedorova-Abrams N.D."/>
            <person name="Andrianopoulos A."/>
        </authorList>
    </citation>
    <scope>NUCLEOTIDE SEQUENCE [LARGE SCALE GENOMIC DNA]</scope>
    <source>
        <strain>ATCC 18224 / CBS 334.59 / QM 7333</strain>
    </source>
</reference>
<feature type="transit peptide" description="Mitochondrion" evidence="1">
    <location>
        <begin position="1"/>
        <end position="24"/>
    </location>
</feature>
<feature type="chain" id="PRO_0000385579" description="Elongation factor G, mitochondrial">
    <location>
        <begin position="25"/>
        <end position="803"/>
    </location>
</feature>
<feature type="domain" description="tr-type G">
    <location>
        <begin position="102"/>
        <end position="388"/>
    </location>
</feature>
<feature type="binding site" evidence="1">
    <location>
        <begin position="111"/>
        <end position="118"/>
    </location>
    <ligand>
        <name>GTP</name>
        <dbReference type="ChEBI" id="CHEBI:37565"/>
    </ligand>
</feature>
<feature type="binding site" evidence="1">
    <location>
        <begin position="186"/>
        <end position="190"/>
    </location>
    <ligand>
        <name>GTP</name>
        <dbReference type="ChEBI" id="CHEBI:37565"/>
    </ligand>
</feature>
<feature type="binding site" evidence="1">
    <location>
        <begin position="240"/>
        <end position="243"/>
    </location>
    <ligand>
        <name>GTP</name>
        <dbReference type="ChEBI" id="CHEBI:37565"/>
    </ligand>
</feature>
<gene>
    <name type="primary">mef1</name>
    <name type="ORF">PMAA_094650</name>
</gene>
<proteinExistence type="inferred from homology"/>
<keyword id="KW-0251">Elongation factor</keyword>
<keyword id="KW-0342">GTP-binding</keyword>
<keyword id="KW-0496">Mitochondrion</keyword>
<keyword id="KW-0547">Nucleotide-binding</keyword>
<keyword id="KW-0648">Protein biosynthesis</keyword>
<keyword id="KW-1185">Reference proteome</keyword>
<keyword id="KW-0809">Transit peptide</keyword>
<name>EFGM_TALMQ</name>
<dbReference type="EMBL" id="DS995902">
    <property type="protein sequence ID" value="EEA22859.1"/>
    <property type="molecule type" value="Genomic_DNA"/>
</dbReference>
<dbReference type="RefSeq" id="XP_002149026.1">
    <property type="nucleotide sequence ID" value="XM_002148990.1"/>
</dbReference>
<dbReference type="SMR" id="B6QHL4"/>
<dbReference type="STRING" id="441960.B6QHL4"/>
<dbReference type="VEuPathDB" id="FungiDB:PMAA_094650"/>
<dbReference type="HOGENOM" id="CLU_002794_4_1_1"/>
<dbReference type="OrthoDB" id="1224at28568"/>
<dbReference type="PhylomeDB" id="B6QHL4"/>
<dbReference type="UniPathway" id="UPA00345"/>
<dbReference type="Proteomes" id="UP000001294">
    <property type="component" value="Unassembled WGS sequence"/>
</dbReference>
<dbReference type="GO" id="GO:0005739">
    <property type="term" value="C:mitochondrion"/>
    <property type="evidence" value="ECO:0007669"/>
    <property type="project" value="UniProtKB-SubCell"/>
</dbReference>
<dbReference type="GO" id="GO:0005525">
    <property type="term" value="F:GTP binding"/>
    <property type="evidence" value="ECO:0007669"/>
    <property type="project" value="UniProtKB-UniRule"/>
</dbReference>
<dbReference type="GO" id="GO:0003924">
    <property type="term" value="F:GTPase activity"/>
    <property type="evidence" value="ECO:0007669"/>
    <property type="project" value="UniProtKB-UniRule"/>
</dbReference>
<dbReference type="GO" id="GO:0003746">
    <property type="term" value="F:translation elongation factor activity"/>
    <property type="evidence" value="ECO:0007669"/>
    <property type="project" value="UniProtKB-UniRule"/>
</dbReference>
<dbReference type="GO" id="GO:0070125">
    <property type="term" value="P:mitochondrial translational elongation"/>
    <property type="evidence" value="ECO:0007669"/>
    <property type="project" value="UniProtKB-UniRule"/>
</dbReference>
<dbReference type="CDD" id="cd01886">
    <property type="entry name" value="EF-G"/>
    <property type="match status" value="1"/>
</dbReference>
<dbReference type="CDD" id="cd16262">
    <property type="entry name" value="EFG_III"/>
    <property type="match status" value="1"/>
</dbReference>
<dbReference type="CDD" id="cd01434">
    <property type="entry name" value="EFG_mtEFG1_IV"/>
    <property type="match status" value="1"/>
</dbReference>
<dbReference type="CDD" id="cd04091">
    <property type="entry name" value="mtEFG1_II_like"/>
    <property type="match status" value="1"/>
</dbReference>
<dbReference type="FunFam" id="3.30.230.10:FF:000003">
    <property type="entry name" value="Elongation factor G"/>
    <property type="match status" value="1"/>
</dbReference>
<dbReference type="FunFam" id="3.30.70.870:FF:000001">
    <property type="entry name" value="Elongation factor G"/>
    <property type="match status" value="1"/>
</dbReference>
<dbReference type="FunFam" id="2.40.30.10:FF:000022">
    <property type="entry name" value="Elongation factor G, mitochondrial"/>
    <property type="match status" value="1"/>
</dbReference>
<dbReference type="FunFam" id="3.30.70.240:FF:000015">
    <property type="entry name" value="Elongation factor G, mitochondrial"/>
    <property type="match status" value="1"/>
</dbReference>
<dbReference type="FunFam" id="3.40.50.300:FF:000558">
    <property type="entry name" value="Elongation factor G, mitochondrial"/>
    <property type="match status" value="1"/>
</dbReference>
<dbReference type="Gene3D" id="3.30.230.10">
    <property type="match status" value="1"/>
</dbReference>
<dbReference type="Gene3D" id="3.30.70.240">
    <property type="match status" value="1"/>
</dbReference>
<dbReference type="Gene3D" id="3.30.70.870">
    <property type="entry name" value="Elongation Factor G (Translational Gtpase), domain 3"/>
    <property type="match status" value="1"/>
</dbReference>
<dbReference type="Gene3D" id="3.40.50.300">
    <property type="entry name" value="P-loop containing nucleotide triphosphate hydrolases"/>
    <property type="match status" value="1"/>
</dbReference>
<dbReference type="Gene3D" id="2.40.30.10">
    <property type="entry name" value="Translation factors"/>
    <property type="match status" value="1"/>
</dbReference>
<dbReference type="HAMAP" id="MF_00054_B">
    <property type="entry name" value="EF_G_EF_2_B"/>
    <property type="match status" value="1"/>
</dbReference>
<dbReference type="InterPro" id="IPR041095">
    <property type="entry name" value="EFG_II"/>
</dbReference>
<dbReference type="InterPro" id="IPR009022">
    <property type="entry name" value="EFG_III"/>
</dbReference>
<dbReference type="InterPro" id="IPR035647">
    <property type="entry name" value="EFG_III/V"/>
</dbReference>
<dbReference type="InterPro" id="IPR047872">
    <property type="entry name" value="EFG_IV"/>
</dbReference>
<dbReference type="InterPro" id="IPR000640">
    <property type="entry name" value="EFG_V-like"/>
</dbReference>
<dbReference type="InterPro" id="IPR004161">
    <property type="entry name" value="EFTu-like_2"/>
</dbReference>
<dbReference type="InterPro" id="IPR031157">
    <property type="entry name" value="G_TR_CS"/>
</dbReference>
<dbReference type="InterPro" id="IPR027417">
    <property type="entry name" value="P-loop_NTPase"/>
</dbReference>
<dbReference type="InterPro" id="IPR020568">
    <property type="entry name" value="Ribosomal_Su5_D2-typ_SF"/>
</dbReference>
<dbReference type="InterPro" id="IPR014721">
    <property type="entry name" value="Ribsml_uS5_D2-typ_fold_subgr"/>
</dbReference>
<dbReference type="InterPro" id="IPR005225">
    <property type="entry name" value="Small_GTP-bd"/>
</dbReference>
<dbReference type="InterPro" id="IPR000795">
    <property type="entry name" value="T_Tr_GTP-bd_dom"/>
</dbReference>
<dbReference type="InterPro" id="IPR009000">
    <property type="entry name" value="Transl_B-barrel_sf"/>
</dbReference>
<dbReference type="InterPro" id="IPR004540">
    <property type="entry name" value="Transl_elong_EFG/EF2"/>
</dbReference>
<dbReference type="InterPro" id="IPR005517">
    <property type="entry name" value="Transl_elong_EFG/EF2_IV"/>
</dbReference>
<dbReference type="NCBIfam" id="TIGR00484">
    <property type="entry name" value="EF-G"/>
    <property type="match status" value="1"/>
</dbReference>
<dbReference type="NCBIfam" id="NF009381">
    <property type="entry name" value="PRK12740.1-5"/>
    <property type="match status" value="1"/>
</dbReference>
<dbReference type="NCBIfam" id="TIGR00231">
    <property type="entry name" value="small_GTP"/>
    <property type="match status" value="1"/>
</dbReference>
<dbReference type="PANTHER" id="PTHR43636">
    <property type="entry name" value="ELONGATION FACTOR G, MITOCHONDRIAL"/>
    <property type="match status" value="1"/>
</dbReference>
<dbReference type="PANTHER" id="PTHR43636:SF2">
    <property type="entry name" value="ELONGATION FACTOR G, MITOCHONDRIAL"/>
    <property type="match status" value="1"/>
</dbReference>
<dbReference type="Pfam" id="PF00679">
    <property type="entry name" value="EFG_C"/>
    <property type="match status" value="1"/>
</dbReference>
<dbReference type="Pfam" id="PF14492">
    <property type="entry name" value="EFG_III"/>
    <property type="match status" value="1"/>
</dbReference>
<dbReference type="Pfam" id="PF03764">
    <property type="entry name" value="EFG_IV"/>
    <property type="match status" value="1"/>
</dbReference>
<dbReference type="Pfam" id="PF00009">
    <property type="entry name" value="GTP_EFTU"/>
    <property type="match status" value="1"/>
</dbReference>
<dbReference type="Pfam" id="PF03144">
    <property type="entry name" value="GTP_EFTU_D2"/>
    <property type="match status" value="1"/>
</dbReference>
<dbReference type="PRINTS" id="PR00315">
    <property type="entry name" value="ELONGATNFCT"/>
</dbReference>
<dbReference type="SMART" id="SM00838">
    <property type="entry name" value="EFG_C"/>
    <property type="match status" value="1"/>
</dbReference>
<dbReference type="SMART" id="SM00889">
    <property type="entry name" value="EFG_IV"/>
    <property type="match status" value="1"/>
</dbReference>
<dbReference type="SUPFAM" id="SSF54980">
    <property type="entry name" value="EF-G C-terminal domain-like"/>
    <property type="match status" value="2"/>
</dbReference>
<dbReference type="SUPFAM" id="SSF52540">
    <property type="entry name" value="P-loop containing nucleoside triphosphate hydrolases"/>
    <property type="match status" value="1"/>
</dbReference>
<dbReference type="SUPFAM" id="SSF54211">
    <property type="entry name" value="Ribosomal protein S5 domain 2-like"/>
    <property type="match status" value="1"/>
</dbReference>
<dbReference type="SUPFAM" id="SSF50447">
    <property type="entry name" value="Translation proteins"/>
    <property type="match status" value="1"/>
</dbReference>
<dbReference type="PROSITE" id="PS00301">
    <property type="entry name" value="G_TR_1"/>
    <property type="match status" value="1"/>
</dbReference>
<dbReference type="PROSITE" id="PS51722">
    <property type="entry name" value="G_TR_2"/>
    <property type="match status" value="1"/>
</dbReference>